<gene>
    <name evidence="1" type="primary">uvrA</name>
    <name type="ordered locus">NMB0962</name>
</gene>
<reference key="1">
    <citation type="journal article" date="2000" name="Science">
        <title>Complete genome sequence of Neisseria meningitidis serogroup B strain MC58.</title>
        <authorList>
            <person name="Tettelin H."/>
            <person name="Saunders N.J."/>
            <person name="Heidelberg J.F."/>
            <person name="Jeffries A.C."/>
            <person name="Nelson K.E."/>
            <person name="Eisen J.A."/>
            <person name="Ketchum K.A."/>
            <person name="Hood D.W."/>
            <person name="Peden J.F."/>
            <person name="Dodson R.J."/>
            <person name="Nelson W.C."/>
            <person name="Gwinn M.L."/>
            <person name="DeBoy R.T."/>
            <person name="Peterson J.D."/>
            <person name="Hickey E.K."/>
            <person name="Haft D.H."/>
            <person name="Salzberg S.L."/>
            <person name="White O."/>
            <person name="Fleischmann R.D."/>
            <person name="Dougherty B.A."/>
            <person name="Mason T.M."/>
            <person name="Ciecko A."/>
            <person name="Parksey D.S."/>
            <person name="Blair E."/>
            <person name="Cittone H."/>
            <person name="Clark E.B."/>
            <person name="Cotton M.D."/>
            <person name="Utterback T.R."/>
            <person name="Khouri H.M."/>
            <person name="Qin H."/>
            <person name="Vamathevan J.J."/>
            <person name="Gill J."/>
            <person name="Scarlato V."/>
            <person name="Masignani V."/>
            <person name="Pizza M."/>
            <person name="Grandi G."/>
            <person name="Sun L."/>
            <person name="Smith H.O."/>
            <person name="Fraser C.M."/>
            <person name="Moxon E.R."/>
            <person name="Rappuoli R."/>
            <person name="Venter J.C."/>
        </authorList>
    </citation>
    <scope>NUCLEOTIDE SEQUENCE [LARGE SCALE GENOMIC DNA]</scope>
    <source>
        <strain>ATCC BAA-335 / MC58</strain>
    </source>
</reference>
<name>UVRA_NEIMB</name>
<organism>
    <name type="scientific">Neisseria meningitidis serogroup B (strain ATCC BAA-335 / MC58)</name>
    <dbReference type="NCBI Taxonomy" id="122586"/>
    <lineage>
        <taxon>Bacteria</taxon>
        <taxon>Pseudomonadati</taxon>
        <taxon>Pseudomonadota</taxon>
        <taxon>Betaproteobacteria</taxon>
        <taxon>Neisseriales</taxon>
        <taxon>Neisseriaceae</taxon>
        <taxon>Neisseria</taxon>
    </lineage>
</organism>
<dbReference type="EMBL" id="AE002098">
    <property type="protein sequence ID" value="AAF41368.1"/>
    <property type="molecule type" value="Genomic_DNA"/>
</dbReference>
<dbReference type="PIR" id="A81138">
    <property type="entry name" value="A81138"/>
</dbReference>
<dbReference type="RefSeq" id="NP_274000.1">
    <property type="nucleotide sequence ID" value="NC_003112.2"/>
</dbReference>
<dbReference type="RefSeq" id="WP_002244094.1">
    <property type="nucleotide sequence ID" value="NC_003112.2"/>
</dbReference>
<dbReference type="SMR" id="Q9JZP1"/>
<dbReference type="FunCoup" id="Q9JZP1">
    <property type="interactions" value="290"/>
</dbReference>
<dbReference type="STRING" id="122586.NMB0962"/>
<dbReference type="PaxDb" id="122586-NMB0962"/>
<dbReference type="KEGG" id="nme:NMB0962"/>
<dbReference type="PATRIC" id="fig|122586.8.peg.1218"/>
<dbReference type="HOGENOM" id="CLU_001370_0_0_4"/>
<dbReference type="InParanoid" id="Q9JZP1"/>
<dbReference type="OrthoDB" id="9809851at2"/>
<dbReference type="Proteomes" id="UP000000425">
    <property type="component" value="Chromosome"/>
</dbReference>
<dbReference type="GO" id="GO:0005737">
    <property type="term" value="C:cytoplasm"/>
    <property type="evidence" value="ECO:0007669"/>
    <property type="project" value="UniProtKB-SubCell"/>
</dbReference>
<dbReference type="GO" id="GO:0009380">
    <property type="term" value="C:excinuclease repair complex"/>
    <property type="evidence" value="ECO:0007669"/>
    <property type="project" value="InterPro"/>
</dbReference>
<dbReference type="GO" id="GO:0005524">
    <property type="term" value="F:ATP binding"/>
    <property type="evidence" value="ECO:0007669"/>
    <property type="project" value="UniProtKB-UniRule"/>
</dbReference>
<dbReference type="GO" id="GO:0016887">
    <property type="term" value="F:ATP hydrolysis activity"/>
    <property type="evidence" value="ECO:0007669"/>
    <property type="project" value="InterPro"/>
</dbReference>
<dbReference type="GO" id="GO:0003677">
    <property type="term" value="F:DNA binding"/>
    <property type="evidence" value="ECO:0007669"/>
    <property type="project" value="UniProtKB-UniRule"/>
</dbReference>
<dbReference type="GO" id="GO:0009381">
    <property type="term" value="F:excinuclease ABC activity"/>
    <property type="evidence" value="ECO:0007669"/>
    <property type="project" value="UniProtKB-UniRule"/>
</dbReference>
<dbReference type="GO" id="GO:0008270">
    <property type="term" value="F:zinc ion binding"/>
    <property type="evidence" value="ECO:0007669"/>
    <property type="project" value="UniProtKB-UniRule"/>
</dbReference>
<dbReference type="GO" id="GO:0006289">
    <property type="term" value="P:nucleotide-excision repair"/>
    <property type="evidence" value="ECO:0007669"/>
    <property type="project" value="UniProtKB-UniRule"/>
</dbReference>
<dbReference type="GO" id="GO:0009432">
    <property type="term" value="P:SOS response"/>
    <property type="evidence" value="ECO:0007669"/>
    <property type="project" value="UniProtKB-UniRule"/>
</dbReference>
<dbReference type="CDD" id="cd03270">
    <property type="entry name" value="ABC_UvrA_I"/>
    <property type="match status" value="1"/>
</dbReference>
<dbReference type="CDD" id="cd03271">
    <property type="entry name" value="ABC_UvrA_II"/>
    <property type="match status" value="1"/>
</dbReference>
<dbReference type="FunFam" id="1.10.8.280:FF:000001">
    <property type="entry name" value="UvrABC system protein A"/>
    <property type="match status" value="1"/>
</dbReference>
<dbReference type="FunFam" id="1.20.1580.10:FF:000002">
    <property type="entry name" value="UvrABC system protein A"/>
    <property type="match status" value="1"/>
</dbReference>
<dbReference type="FunFam" id="3.30.190.20:FF:000003">
    <property type="entry name" value="UvrABC system protein A"/>
    <property type="match status" value="1"/>
</dbReference>
<dbReference type="FunFam" id="3.40.50.300:FF:000028">
    <property type="entry name" value="UvrABC system protein A"/>
    <property type="match status" value="1"/>
</dbReference>
<dbReference type="Gene3D" id="1.10.8.280">
    <property type="entry name" value="ABC transporter ATPase domain-like"/>
    <property type="match status" value="1"/>
</dbReference>
<dbReference type="Gene3D" id="1.20.1580.10">
    <property type="entry name" value="ABC transporter ATPase like domain"/>
    <property type="match status" value="2"/>
</dbReference>
<dbReference type="Gene3D" id="3.30.1490.20">
    <property type="entry name" value="ATP-grasp fold, A domain"/>
    <property type="match status" value="1"/>
</dbReference>
<dbReference type="Gene3D" id="3.40.50.300">
    <property type="entry name" value="P-loop containing nucleotide triphosphate hydrolases"/>
    <property type="match status" value="2"/>
</dbReference>
<dbReference type="HAMAP" id="MF_00205">
    <property type="entry name" value="UvrA"/>
    <property type="match status" value="1"/>
</dbReference>
<dbReference type="InterPro" id="IPR003439">
    <property type="entry name" value="ABC_transporter-like_ATP-bd"/>
</dbReference>
<dbReference type="InterPro" id="IPR017871">
    <property type="entry name" value="ABC_transporter-like_CS"/>
</dbReference>
<dbReference type="InterPro" id="IPR013815">
    <property type="entry name" value="ATP_grasp_subdomain_1"/>
</dbReference>
<dbReference type="InterPro" id="IPR027417">
    <property type="entry name" value="P-loop_NTPase"/>
</dbReference>
<dbReference type="InterPro" id="IPR004602">
    <property type="entry name" value="UvrA"/>
</dbReference>
<dbReference type="InterPro" id="IPR041552">
    <property type="entry name" value="UvrA_DNA-bd"/>
</dbReference>
<dbReference type="InterPro" id="IPR041102">
    <property type="entry name" value="UvrA_inter"/>
</dbReference>
<dbReference type="NCBIfam" id="NF001503">
    <property type="entry name" value="PRK00349.1"/>
    <property type="match status" value="1"/>
</dbReference>
<dbReference type="NCBIfam" id="TIGR00630">
    <property type="entry name" value="uvra"/>
    <property type="match status" value="1"/>
</dbReference>
<dbReference type="PANTHER" id="PTHR43152">
    <property type="entry name" value="UVRABC SYSTEM PROTEIN A"/>
    <property type="match status" value="1"/>
</dbReference>
<dbReference type="PANTHER" id="PTHR43152:SF3">
    <property type="entry name" value="UVRABC SYSTEM PROTEIN A"/>
    <property type="match status" value="1"/>
</dbReference>
<dbReference type="Pfam" id="PF17755">
    <property type="entry name" value="UvrA_DNA-bind"/>
    <property type="match status" value="1"/>
</dbReference>
<dbReference type="Pfam" id="PF17760">
    <property type="entry name" value="UvrA_inter"/>
    <property type="match status" value="1"/>
</dbReference>
<dbReference type="SUPFAM" id="SSF52540">
    <property type="entry name" value="P-loop containing nucleoside triphosphate hydrolases"/>
    <property type="match status" value="2"/>
</dbReference>
<dbReference type="PROSITE" id="PS00211">
    <property type="entry name" value="ABC_TRANSPORTER_1"/>
    <property type="match status" value="2"/>
</dbReference>
<dbReference type="PROSITE" id="PS50893">
    <property type="entry name" value="ABC_TRANSPORTER_2"/>
    <property type="match status" value="1"/>
</dbReference>
<protein>
    <recommendedName>
        <fullName evidence="1">UvrABC system protein A</fullName>
        <shortName evidence="1">UvrA protein</shortName>
    </recommendedName>
    <alternativeName>
        <fullName evidence="1">Excinuclease ABC subunit A</fullName>
    </alternativeName>
</protein>
<feature type="chain" id="PRO_0000093073" description="UvrABC system protein A">
    <location>
        <begin position="1"/>
        <end position="949"/>
    </location>
</feature>
<feature type="domain" description="ABC transporter 1" evidence="1">
    <location>
        <begin position="319"/>
        <end position="596"/>
    </location>
</feature>
<feature type="domain" description="ABC transporter 2" evidence="1">
    <location>
        <begin position="616"/>
        <end position="945"/>
    </location>
</feature>
<feature type="zinc finger region" description="C4-type" evidence="1">
    <location>
        <begin position="262"/>
        <end position="289"/>
    </location>
</feature>
<feature type="zinc finger region" description="C4-type" evidence="1">
    <location>
        <begin position="748"/>
        <end position="774"/>
    </location>
</feature>
<feature type="binding site" evidence="1">
    <location>
        <begin position="42"/>
        <end position="49"/>
    </location>
    <ligand>
        <name>ATP</name>
        <dbReference type="ChEBI" id="CHEBI:30616"/>
    </ligand>
</feature>
<feature type="binding site" evidence="1">
    <location>
        <begin position="649"/>
        <end position="656"/>
    </location>
    <ligand>
        <name>ATP</name>
        <dbReference type="ChEBI" id="CHEBI:30616"/>
    </ligand>
</feature>
<accession>Q9JZP1</accession>
<keyword id="KW-0067">ATP-binding</keyword>
<keyword id="KW-0963">Cytoplasm</keyword>
<keyword id="KW-0227">DNA damage</keyword>
<keyword id="KW-0228">DNA excision</keyword>
<keyword id="KW-0234">DNA repair</keyword>
<keyword id="KW-0238">DNA-binding</keyword>
<keyword id="KW-0267">Excision nuclease</keyword>
<keyword id="KW-0479">Metal-binding</keyword>
<keyword id="KW-0547">Nucleotide-binding</keyword>
<keyword id="KW-1185">Reference proteome</keyword>
<keyword id="KW-0677">Repeat</keyword>
<keyword id="KW-0742">SOS response</keyword>
<keyword id="KW-0862">Zinc</keyword>
<keyword id="KW-0863">Zinc-finger</keyword>
<comment type="function">
    <text evidence="1">The UvrABC repair system catalyzes the recognition and processing of DNA lesions. UvrA is an ATPase and a DNA-binding protein. A damage recognition complex composed of 2 UvrA and 2 UvrB subunits scans DNA for abnormalities. When the presence of a lesion has been verified by UvrB, the UvrA molecules dissociate.</text>
</comment>
<comment type="subunit">
    <text evidence="1">Forms a heterotetramer with UvrB during the search for lesions.</text>
</comment>
<comment type="subcellular location">
    <subcellularLocation>
        <location evidence="1">Cytoplasm</location>
    </subcellularLocation>
</comment>
<comment type="similarity">
    <text evidence="1">Belongs to the ABC transporter superfamily. UvrA family.</text>
</comment>
<sequence>MCNHHPQHSHDNDTIRIRGARTHNLKNIDLDIPRHKLVVVTGLSGSGKSSLAFDTLYAEGQRRYVESLSAYARQFLQMMDKPDVDLIEGLSPAISIEQKSTSHNPRSTVGTVTEIHDYLRLLYARVGTPYCPEHKLPLSSQTVSQMVDAVLKLPEDTRVMILAPTVRERKGEFVDFFADLQAQGFARVRVDGEVYQLDEVPKLEKNIKHNIDVVIDRVKVKADIKQRLAESFETALRHGNERALAMEMDSGEEHWFSARFACPVCSYSLPELEPRLFSFNNPMGSCPTCDGLGNTNFFDPEKVVAHPELSLATGAIDGWDKRNQFYFQMIQSLARHYGFDVQAAWETLPEKVKKVVLHGSGKEVIDFTYLSERGTTFNRSHAFEGIIPNLERRYRETDSETVREKLREYQNHRACPSCGGARLRKEARYVYVSGEPLHEVSAWPLTKTHQFFETLDLDGNKKQIAEKILKEITERLGFLINVGLDYLNLSRSAETLSGGEAQRIRLASQIGSGLTGVMYVLDEPSIGLHQRDNDRLLATLKRLRDLGNSVIVVEHDEDAIREADFVVDMGPGAGEHGGNVLIADTPENVAQCENSVTGQYLSGKKSIAVPSERTPVNPDRMLVLKGARGNNLKNVTLELPLGLITCITGVSGSGKSTLINDTLAKITARELNRAQEEPAPFDDIHGLEHLDKVINVDQSPIGRTPRSNPATYTGLFTPIRELFAGVPLSRERGYNVGRFSFNVKGGRCEACQGDGVIKVEMHFLPDVYVPCEVCHGKRYNRETLEIQYKGKNISQVLDMTVEEAREFFDAVPTVSRKLQTLMDVGLGYIRLGQSATTLSGGEAQRVKLALELSKRDTGRTLYILDEPTTGLHFADIALLLEVIGRLKGKGNSIVIIEHNLDVIKTADWIVDLGPEGGDGGGRIIAKGSPEQVAKVKGSYTGKYLKVVLR</sequence>
<proteinExistence type="inferred from homology"/>
<evidence type="ECO:0000255" key="1">
    <source>
        <dbReference type="HAMAP-Rule" id="MF_00205"/>
    </source>
</evidence>